<proteinExistence type="inferred from homology"/>
<name>NQOR_BRASO</name>
<accession>A4Z0W6</accession>
<gene>
    <name type="ordered locus">BRADO6142</name>
</gene>
<feature type="chain" id="PRO_1000084129" description="NAD(P)H dehydrogenase (quinone)">
    <location>
        <begin position="1"/>
        <end position="199"/>
    </location>
</feature>
<feature type="domain" description="Flavodoxin-like" evidence="1">
    <location>
        <begin position="4"/>
        <end position="190"/>
    </location>
</feature>
<feature type="binding site" evidence="1">
    <location>
        <begin position="10"/>
        <end position="15"/>
    </location>
    <ligand>
        <name>FMN</name>
        <dbReference type="ChEBI" id="CHEBI:58210"/>
    </ligand>
</feature>
<feature type="binding site" evidence="1">
    <location>
        <position position="12"/>
    </location>
    <ligand>
        <name>NAD(+)</name>
        <dbReference type="ChEBI" id="CHEBI:57540"/>
    </ligand>
</feature>
<feature type="binding site" evidence="1">
    <location>
        <begin position="78"/>
        <end position="80"/>
    </location>
    <ligand>
        <name>FMN</name>
        <dbReference type="ChEBI" id="CHEBI:58210"/>
    </ligand>
</feature>
<feature type="binding site" evidence="1">
    <location>
        <position position="98"/>
    </location>
    <ligand>
        <name>substrate</name>
    </ligand>
</feature>
<feature type="binding site" evidence="1">
    <location>
        <begin position="113"/>
        <end position="119"/>
    </location>
    <ligand>
        <name>FMN</name>
        <dbReference type="ChEBI" id="CHEBI:58210"/>
    </ligand>
</feature>
<feature type="binding site" evidence="1">
    <location>
        <position position="134"/>
    </location>
    <ligand>
        <name>FMN</name>
        <dbReference type="ChEBI" id="CHEBI:58210"/>
    </ligand>
</feature>
<reference key="1">
    <citation type="journal article" date="2007" name="Science">
        <title>Legumes symbioses: absence of nod genes in photosynthetic bradyrhizobia.</title>
        <authorList>
            <person name="Giraud E."/>
            <person name="Moulin L."/>
            <person name="Vallenet D."/>
            <person name="Barbe V."/>
            <person name="Cytryn E."/>
            <person name="Avarre J.-C."/>
            <person name="Jaubert M."/>
            <person name="Simon D."/>
            <person name="Cartieaux F."/>
            <person name="Prin Y."/>
            <person name="Bena G."/>
            <person name="Hannibal L."/>
            <person name="Fardoux J."/>
            <person name="Kojadinovic M."/>
            <person name="Vuillet L."/>
            <person name="Lajus A."/>
            <person name="Cruveiller S."/>
            <person name="Rouy Z."/>
            <person name="Mangenot S."/>
            <person name="Segurens B."/>
            <person name="Dossat C."/>
            <person name="Franck W.L."/>
            <person name="Chang W.-S."/>
            <person name="Saunders E."/>
            <person name="Bruce D."/>
            <person name="Richardson P."/>
            <person name="Normand P."/>
            <person name="Dreyfus B."/>
            <person name="Pignol D."/>
            <person name="Stacey G."/>
            <person name="Emerich D."/>
            <person name="Vermeglio A."/>
            <person name="Medigue C."/>
            <person name="Sadowsky M."/>
        </authorList>
    </citation>
    <scope>NUCLEOTIDE SEQUENCE [LARGE SCALE GENOMIC DNA]</scope>
    <source>
        <strain>ORS 278</strain>
    </source>
</reference>
<organism>
    <name type="scientific">Bradyrhizobium sp. (strain ORS 278)</name>
    <dbReference type="NCBI Taxonomy" id="114615"/>
    <lineage>
        <taxon>Bacteria</taxon>
        <taxon>Pseudomonadati</taxon>
        <taxon>Pseudomonadota</taxon>
        <taxon>Alphaproteobacteria</taxon>
        <taxon>Hyphomicrobiales</taxon>
        <taxon>Nitrobacteraceae</taxon>
        <taxon>Bradyrhizobium</taxon>
    </lineage>
</organism>
<dbReference type="EC" id="1.6.5.2" evidence="1"/>
<dbReference type="EMBL" id="CU234118">
    <property type="protein sequence ID" value="CAL79792.1"/>
    <property type="molecule type" value="Genomic_DNA"/>
</dbReference>
<dbReference type="RefSeq" id="WP_012029679.1">
    <property type="nucleotide sequence ID" value="NC_009445.1"/>
</dbReference>
<dbReference type="SMR" id="A4Z0W6"/>
<dbReference type="STRING" id="114615.BRADO6142"/>
<dbReference type="KEGG" id="bra:BRADO6142"/>
<dbReference type="eggNOG" id="COG0655">
    <property type="taxonomic scope" value="Bacteria"/>
</dbReference>
<dbReference type="HOGENOM" id="CLU_051402_0_2_5"/>
<dbReference type="OrthoDB" id="9801479at2"/>
<dbReference type="Proteomes" id="UP000001994">
    <property type="component" value="Chromosome"/>
</dbReference>
<dbReference type="GO" id="GO:0016020">
    <property type="term" value="C:membrane"/>
    <property type="evidence" value="ECO:0007669"/>
    <property type="project" value="TreeGrafter"/>
</dbReference>
<dbReference type="GO" id="GO:0050660">
    <property type="term" value="F:flavin adenine dinucleotide binding"/>
    <property type="evidence" value="ECO:0007669"/>
    <property type="project" value="UniProtKB-UniRule"/>
</dbReference>
<dbReference type="GO" id="GO:0010181">
    <property type="term" value="F:FMN binding"/>
    <property type="evidence" value="ECO:0007669"/>
    <property type="project" value="InterPro"/>
</dbReference>
<dbReference type="GO" id="GO:0051287">
    <property type="term" value="F:NAD binding"/>
    <property type="evidence" value="ECO:0007669"/>
    <property type="project" value="UniProtKB-UniRule"/>
</dbReference>
<dbReference type="GO" id="GO:0050136">
    <property type="term" value="F:NADH:ubiquinone reductase (non-electrogenic) activity"/>
    <property type="evidence" value="ECO:0007669"/>
    <property type="project" value="RHEA"/>
</dbReference>
<dbReference type="GO" id="GO:0050661">
    <property type="term" value="F:NADP binding"/>
    <property type="evidence" value="ECO:0007669"/>
    <property type="project" value="UniProtKB-UniRule"/>
</dbReference>
<dbReference type="GO" id="GO:0008753">
    <property type="term" value="F:NADPH dehydrogenase (quinone) activity"/>
    <property type="evidence" value="ECO:0007669"/>
    <property type="project" value="RHEA"/>
</dbReference>
<dbReference type="FunFam" id="3.40.50.360:FF:000001">
    <property type="entry name" value="NAD(P)H dehydrogenase (Quinone) FQR1-like"/>
    <property type="match status" value="1"/>
</dbReference>
<dbReference type="Gene3D" id="3.40.50.360">
    <property type="match status" value="1"/>
</dbReference>
<dbReference type="HAMAP" id="MF_01017">
    <property type="entry name" value="NQOR"/>
    <property type="match status" value="1"/>
</dbReference>
<dbReference type="InterPro" id="IPR008254">
    <property type="entry name" value="Flavodoxin/NO_synth"/>
</dbReference>
<dbReference type="InterPro" id="IPR029039">
    <property type="entry name" value="Flavoprotein-like_sf"/>
</dbReference>
<dbReference type="InterPro" id="IPR010089">
    <property type="entry name" value="Flavoprotein_WrbA-like"/>
</dbReference>
<dbReference type="InterPro" id="IPR005025">
    <property type="entry name" value="FMN_Rdtase-like_dom"/>
</dbReference>
<dbReference type="InterPro" id="IPR037513">
    <property type="entry name" value="NQO"/>
</dbReference>
<dbReference type="NCBIfam" id="TIGR01755">
    <property type="entry name" value="flav_wrbA"/>
    <property type="match status" value="1"/>
</dbReference>
<dbReference type="NCBIfam" id="NF002999">
    <property type="entry name" value="PRK03767.1"/>
    <property type="match status" value="1"/>
</dbReference>
<dbReference type="PANTHER" id="PTHR30546">
    <property type="entry name" value="FLAVODOXIN-RELATED PROTEIN WRBA-RELATED"/>
    <property type="match status" value="1"/>
</dbReference>
<dbReference type="PANTHER" id="PTHR30546:SF23">
    <property type="entry name" value="FLAVOPROTEIN-LIKE PROTEIN YCP4-RELATED"/>
    <property type="match status" value="1"/>
</dbReference>
<dbReference type="Pfam" id="PF03358">
    <property type="entry name" value="FMN_red"/>
    <property type="match status" value="1"/>
</dbReference>
<dbReference type="SUPFAM" id="SSF52218">
    <property type="entry name" value="Flavoproteins"/>
    <property type="match status" value="1"/>
</dbReference>
<dbReference type="PROSITE" id="PS50902">
    <property type="entry name" value="FLAVODOXIN_LIKE"/>
    <property type="match status" value="1"/>
</dbReference>
<keyword id="KW-0285">Flavoprotein</keyword>
<keyword id="KW-0288">FMN</keyword>
<keyword id="KW-0520">NAD</keyword>
<keyword id="KW-0521">NADP</keyword>
<keyword id="KW-0547">Nucleotide-binding</keyword>
<keyword id="KW-0560">Oxidoreductase</keyword>
<keyword id="KW-1185">Reference proteome</keyword>
<comment type="catalytic activity">
    <reaction evidence="1">
        <text>a quinone + NADH + H(+) = a quinol + NAD(+)</text>
        <dbReference type="Rhea" id="RHEA:46160"/>
        <dbReference type="ChEBI" id="CHEBI:15378"/>
        <dbReference type="ChEBI" id="CHEBI:24646"/>
        <dbReference type="ChEBI" id="CHEBI:57540"/>
        <dbReference type="ChEBI" id="CHEBI:57945"/>
        <dbReference type="ChEBI" id="CHEBI:132124"/>
        <dbReference type="EC" id="1.6.5.2"/>
    </reaction>
</comment>
<comment type="catalytic activity">
    <reaction evidence="1">
        <text>a quinone + NADPH + H(+) = a quinol + NADP(+)</text>
        <dbReference type="Rhea" id="RHEA:46164"/>
        <dbReference type="ChEBI" id="CHEBI:15378"/>
        <dbReference type="ChEBI" id="CHEBI:24646"/>
        <dbReference type="ChEBI" id="CHEBI:57783"/>
        <dbReference type="ChEBI" id="CHEBI:58349"/>
        <dbReference type="ChEBI" id="CHEBI:132124"/>
        <dbReference type="EC" id="1.6.5.2"/>
    </reaction>
</comment>
<comment type="cofactor">
    <cofactor evidence="1">
        <name>FMN</name>
        <dbReference type="ChEBI" id="CHEBI:58210"/>
    </cofactor>
    <text evidence="1">Binds 1 FMN per monomer.</text>
</comment>
<comment type="similarity">
    <text evidence="1">Belongs to the WrbA family.</text>
</comment>
<evidence type="ECO:0000255" key="1">
    <source>
        <dbReference type="HAMAP-Rule" id="MF_01017"/>
    </source>
</evidence>
<sequence>MTKVLVLYYSAYGHIEAMANAVAEGAREAGATVDIKRVPELVPDDVAKASYYKLDQAAPIAKIEELADYDAIIVGTGTRFGRMASQMANFLDQAGGLWAKGALNGKVGGAFTSTATQHGGQETTLFTIITNLLHFGMTIVGLNYGFAGQMKLDEVTGGSPYGATTITGGDGSRQPSENELAGARYQGRVIAETAKKLHG</sequence>
<protein>
    <recommendedName>
        <fullName evidence="1">NAD(P)H dehydrogenase (quinone)</fullName>
        <ecNumber evidence="1">1.6.5.2</ecNumber>
    </recommendedName>
    <alternativeName>
        <fullName>Flavoprotein WrbA</fullName>
    </alternativeName>
    <alternativeName>
        <fullName evidence="1">NAD(P)H:quinone oxidoreductase</fullName>
        <shortName evidence="1">NQO</shortName>
    </alternativeName>
</protein>